<gene>
    <name evidence="1" type="primary">metE</name>
    <name type="ordered locus">BPEN_652</name>
</gene>
<sequence length="764" mass="89003">MTIVGHILGFPRIGLHRELKYALEYYWDGKIKEDKLLEIGRTLRIRHWKQQKDSGIDWISVGDFAWYDHVLTTSLMLNNIPDRHRIGQENINLNTLFRISRGYSLDKKLIPPSEMKKWFNTNYHYIVPEFVPNQEFKLNWTQLFDEIDEALSLKYTVKPILLGPISYLWLGKIKGKKFDRLSLLPNLLSVYQEILDILLSKNIDWIQIDEPILVLELPLQWLNAYLSAYEQLHGKVKLLLTTYFDSIYHQLDIITRLKIDGLHVDLVSNPDNIPLLHARLPKHWTLSAGVVNGRNVWKTNLHDWFKKLYPLVGERSLWIGSSCSLLHSPIDLNTEIKLDKHIKEWFAFALQKCYEIKMLCAALNAENTSDATYEDTLSEYYISNNLRSYSSTIHNIQVKKRLEHIDEISYSRSSPYTTRVTLQHKKLNLPLFPTTTIGSFPQTEEIRKLRSRFKNNQINKEDYHLNIKNYIKKIIMEQEKLDLDILVHGEPERNDMVEYFGENLNGFIFTQNGWVQSYGSRCVKPPVIIGDISRSKPITIEWISYAQSLTNKPIKGILTGPVTIMSWSFPREDMQRKTIALQLALSIRDEVIDLEKSGIGIIQIDEPALREGLPLKRSDQKQYLEWAINVFRITVSSVKDDTQIHTHMCYSEFSDIIYAILALDADVISIEAARSDEKILKSIRHVIKNLNEIGPGIYDIHSPNKPTQNDLIRRINQLLKYIPEQRLWINPDCGLKTRSWPEIKHSLNNMVSAAKLLRKQFYSS</sequence>
<organism>
    <name type="scientific">Blochmanniella pennsylvanica (strain BPEN)</name>
    <dbReference type="NCBI Taxonomy" id="291272"/>
    <lineage>
        <taxon>Bacteria</taxon>
        <taxon>Pseudomonadati</taxon>
        <taxon>Pseudomonadota</taxon>
        <taxon>Gammaproteobacteria</taxon>
        <taxon>Enterobacterales</taxon>
        <taxon>Enterobacteriaceae</taxon>
        <taxon>ant endosymbionts</taxon>
        <taxon>Candidatus Blochmanniella</taxon>
    </lineage>
</organism>
<protein>
    <recommendedName>
        <fullName evidence="1">5-methyltetrahydropteroyltriglutamate--homocysteine methyltransferase</fullName>
        <ecNumber evidence="1">2.1.1.14</ecNumber>
    </recommendedName>
    <alternativeName>
        <fullName evidence="1">Cobalamin-independent methionine synthase</fullName>
    </alternativeName>
    <alternativeName>
        <fullName evidence="1">Methionine synthase, vitamin-B12 independent isozyme</fullName>
    </alternativeName>
</protein>
<accession>Q491V4</accession>
<proteinExistence type="inferred from homology"/>
<evidence type="ECO:0000255" key="1">
    <source>
        <dbReference type="HAMAP-Rule" id="MF_00172"/>
    </source>
</evidence>
<comment type="function">
    <text evidence="1">Catalyzes the transfer of a methyl group from 5-methyltetrahydrofolate to homocysteine resulting in methionine formation.</text>
</comment>
<comment type="catalytic activity">
    <reaction evidence="1">
        <text>5-methyltetrahydropteroyltri-L-glutamate + L-homocysteine = tetrahydropteroyltri-L-glutamate + L-methionine</text>
        <dbReference type="Rhea" id="RHEA:21196"/>
        <dbReference type="ChEBI" id="CHEBI:57844"/>
        <dbReference type="ChEBI" id="CHEBI:58140"/>
        <dbReference type="ChEBI" id="CHEBI:58199"/>
        <dbReference type="ChEBI" id="CHEBI:58207"/>
        <dbReference type="EC" id="2.1.1.14"/>
    </reaction>
</comment>
<comment type="cofactor">
    <cofactor evidence="1">
        <name>Zn(2+)</name>
        <dbReference type="ChEBI" id="CHEBI:29105"/>
    </cofactor>
    <text evidence="1">Binds 1 zinc ion per subunit.</text>
</comment>
<comment type="pathway">
    <text evidence="1">Amino-acid biosynthesis; L-methionine biosynthesis via de novo pathway; L-methionine from L-homocysteine (MetE route): step 1/1.</text>
</comment>
<comment type="similarity">
    <text evidence="1">Belongs to the vitamin-B12 independent methionine synthase family.</text>
</comment>
<reference key="1">
    <citation type="journal article" date="2005" name="Genome Res.">
        <title>Genome sequence of Blochmannia pennsylvanicus indicates parallel evolutionary trends among bacterial mutualists of insects.</title>
        <authorList>
            <person name="Degnan P.H."/>
            <person name="Lazarus A.B."/>
            <person name="Wernegreen J.J."/>
        </authorList>
    </citation>
    <scope>NUCLEOTIDE SEQUENCE [LARGE SCALE GENOMIC DNA]</scope>
    <source>
        <strain>BPEN</strain>
    </source>
</reference>
<name>METE_BLOPB</name>
<feature type="chain" id="PRO_1000017226" description="5-methyltetrahydropteroyltriglutamate--homocysteine methyltransferase">
    <location>
        <begin position="1"/>
        <end position="764"/>
    </location>
</feature>
<feature type="active site" description="Proton donor" evidence="1">
    <location>
        <position position="701"/>
    </location>
</feature>
<feature type="binding site" evidence="1">
    <location>
        <begin position="17"/>
        <end position="20"/>
    </location>
    <ligand>
        <name>5-methyltetrahydropteroyltri-L-glutamate</name>
        <dbReference type="ChEBI" id="CHEBI:58207"/>
    </ligand>
</feature>
<feature type="binding site" evidence="1">
    <location>
        <position position="117"/>
    </location>
    <ligand>
        <name>5-methyltetrahydropteroyltri-L-glutamate</name>
        <dbReference type="ChEBI" id="CHEBI:58207"/>
    </ligand>
</feature>
<feature type="binding site" evidence="1">
    <location>
        <begin position="437"/>
        <end position="439"/>
    </location>
    <ligand>
        <name>L-homocysteine</name>
        <dbReference type="ChEBI" id="CHEBI:58199"/>
    </ligand>
</feature>
<feature type="binding site" evidence="1">
    <location>
        <begin position="437"/>
        <end position="439"/>
    </location>
    <ligand>
        <name>L-methionine</name>
        <dbReference type="ChEBI" id="CHEBI:57844"/>
    </ligand>
</feature>
<feature type="binding site" evidence="1">
    <location>
        <position position="490"/>
    </location>
    <ligand>
        <name>L-homocysteine</name>
        <dbReference type="ChEBI" id="CHEBI:58199"/>
    </ligand>
</feature>
<feature type="binding site" evidence="1">
    <location>
        <position position="490"/>
    </location>
    <ligand>
        <name>L-methionine</name>
        <dbReference type="ChEBI" id="CHEBI:57844"/>
    </ligand>
</feature>
<feature type="binding site" evidence="1">
    <location>
        <begin position="521"/>
        <end position="522"/>
    </location>
    <ligand>
        <name>5-methyltetrahydropteroyltri-L-glutamate</name>
        <dbReference type="ChEBI" id="CHEBI:58207"/>
    </ligand>
</feature>
<feature type="binding site" evidence="1">
    <location>
        <position position="567"/>
    </location>
    <ligand>
        <name>5-methyltetrahydropteroyltri-L-glutamate</name>
        <dbReference type="ChEBI" id="CHEBI:58207"/>
    </ligand>
</feature>
<feature type="binding site" evidence="1">
    <location>
        <position position="605"/>
    </location>
    <ligand>
        <name>L-homocysteine</name>
        <dbReference type="ChEBI" id="CHEBI:58199"/>
    </ligand>
</feature>
<feature type="binding site" evidence="1">
    <location>
        <position position="605"/>
    </location>
    <ligand>
        <name>L-methionine</name>
        <dbReference type="ChEBI" id="CHEBI:57844"/>
    </ligand>
</feature>
<feature type="binding site" evidence="1">
    <location>
        <position position="611"/>
    </location>
    <ligand>
        <name>5-methyltetrahydropteroyltri-L-glutamate</name>
        <dbReference type="ChEBI" id="CHEBI:58207"/>
    </ligand>
</feature>
<feature type="binding site" evidence="1">
    <location>
        <position position="647"/>
    </location>
    <ligand>
        <name>Zn(2+)</name>
        <dbReference type="ChEBI" id="CHEBI:29105"/>
        <note>catalytic</note>
    </ligand>
</feature>
<feature type="binding site" evidence="1">
    <location>
        <position position="649"/>
    </location>
    <ligand>
        <name>Zn(2+)</name>
        <dbReference type="ChEBI" id="CHEBI:29105"/>
        <note>catalytic</note>
    </ligand>
</feature>
<feature type="binding site" evidence="1">
    <location>
        <position position="671"/>
    </location>
    <ligand>
        <name>Zn(2+)</name>
        <dbReference type="ChEBI" id="CHEBI:29105"/>
        <note>catalytic</note>
    </ligand>
</feature>
<feature type="binding site" evidence="1">
    <location>
        <position position="733"/>
    </location>
    <ligand>
        <name>Zn(2+)</name>
        <dbReference type="ChEBI" id="CHEBI:29105"/>
        <note>catalytic</note>
    </ligand>
</feature>
<keyword id="KW-0028">Amino-acid biosynthesis</keyword>
<keyword id="KW-0479">Metal-binding</keyword>
<keyword id="KW-0486">Methionine biosynthesis</keyword>
<keyword id="KW-0489">Methyltransferase</keyword>
<keyword id="KW-1185">Reference proteome</keyword>
<keyword id="KW-0677">Repeat</keyword>
<keyword id="KW-0808">Transferase</keyword>
<keyword id="KW-0862">Zinc</keyword>
<dbReference type="EC" id="2.1.1.14" evidence="1"/>
<dbReference type="EMBL" id="CP000016">
    <property type="protein sequence ID" value="AAZ41250.1"/>
    <property type="molecule type" value="Genomic_DNA"/>
</dbReference>
<dbReference type="RefSeq" id="WP_011283161.1">
    <property type="nucleotide sequence ID" value="NC_007292.1"/>
</dbReference>
<dbReference type="SMR" id="Q491V4"/>
<dbReference type="STRING" id="291272.BPEN_652"/>
<dbReference type="KEGG" id="bpn:BPEN_652"/>
<dbReference type="eggNOG" id="COG0620">
    <property type="taxonomic scope" value="Bacteria"/>
</dbReference>
<dbReference type="HOGENOM" id="CLU_013175_0_0_6"/>
<dbReference type="OrthoDB" id="244285at2"/>
<dbReference type="UniPathway" id="UPA00051">
    <property type="reaction ID" value="UER00082"/>
</dbReference>
<dbReference type="Proteomes" id="UP000007794">
    <property type="component" value="Chromosome"/>
</dbReference>
<dbReference type="GO" id="GO:0003871">
    <property type="term" value="F:5-methyltetrahydropteroyltriglutamate-homocysteine S-methyltransferase activity"/>
    <property type="evidence" value="ECO:0007669"/>
    <property type="project" value="UniProtKB-UniRule"/>
</dbReference>
<dbReference type="GO" id="GO:0008270">
    <property type="term" value="F:zinc ion binding"/>
    <property type="evidence" value="ECO:0007669"/>
    <property type="project" value="InterPro"/>
</dbReference>
<dbReference type="GO" id="GO:0009086">
    <property type="term" value="P:methionine biosynthetic process"/>
    <property type="evidence" value="ECO:0007669"/>
    <property type="project" value="UniProtKB-UniRule"/>
</dbReference>
<dbReference type="GO" id="GO:0032259">
    <property type="term" value="P:methylation"/>
    <property type="evidence" value="ECO:0007669"/>
    <property type="project" value="UniProtKB-KW"/>
</dbReference>
<dbReference type="CDD" id="cd03311">
    <property type="entry name" value="CIMS_C_terminal_like"/>
    <property type="match status" value="1"/>
</dbReference>
<dbReference type="CDD" id="cd03312">
    <property type="entry name" value="CIMS_N_terminal_like"/>
    <property type="match status" value="1"/>
</dbReference>
<dbReference type="FunFam" id="3.20.20.210:FF:000003">
    <property type="entry name" value="5-methyltetrahydropteroyltriglutamate--homocysteine methyltransferase"/>
    <property type="match status" value="1"/>
</dbReference>
<dbReference type="Gene3D" id="3.20.20.210">
    <property type="match status" value="2"/>
</dbReference>
<dbReference type="HAMAP" id="MF_00172">
    <property type="entry name" value="Meth_synth"/>
    <property type="match status" value="1"/>
</dbReference>
<dbReference type="InterPro" id="IPR013215">
    <property type="entry name" value="Cbl-indep_Met_Synth_N"/>
</dbReference>
<dbReference type="InterPro" id="IPR006276">
    <property type="entry name" value="Cobalamin-indep_Met_synthase"/>
</dbReference>
<dbReference type="InterPro" id="IPR002629">
    <property type="entry name" value="Met_Synth_C/arc"/>
</dbReference>
<dbReference type="InterPro" id="IPR038071">
    <property type="entry name" value="UROD/MetE-like_sf"/>
</dbReference>
<dbReference type="NCBIfam" id="TIGR01371">
    <property type="entry name" value="met_syn_B12ind"/>
    <property type="match status" value="1"/>
</dbReference>
<dbReference type="NCBIfam" id="NF003556">
    <property type="entry name" value="PRK05222.1"/>
    <property type="match status" value="1"/>
</dbReference>
<dbReference type="PANTHER" id="PTHR30519">
    <property type="entry name" value="5-METHYLTETRAHYDROPTEROYLTRIGLUTAMATE--HOMOCYSTEINE METHYLTRANSFERASE"/>
    <property type="match status" value="1"/>
</dbReference>
<dbReference type="Pfam" id="PF08267">
    <property type="entry name" value="Meth_synt_1"/>
    <property type="match status" value="1"/>
</dbReference>
<dbReference type="Pfam" id="PF01717">
    <property type="entry name" value="Meth_synt_2"/>
    <property type="match status" value="1"/>
</dbReference>
<dbReference type="PIRSF" id="PIRSF000382">
    <property type="entry name" value="MeTrfase_B12_ind"/>
    <property type="match status" value="1"/>
</dbReference>
<dbReference type="SUPFAM" id="SSF51726">
    <property type="entry name" value="UROD/MetE-like"/>
    <property type="match status" value="2"/>
</dbReference>